<protein>
    <recommendedName>
        <fullName evidence="1">Tyrosine recombinase XerA</fullName>
    </recommendedName>
</protein>
<dbReference type="EMBL" id="CP000855">
    <property type="protein sequence ID" value="ACJ16501.1"/>
    <property type="molecule type" value="Genomic_DNA"/>
</dbReference>
<dbReference type="RefSeq" id="WP_012571973.1">
    <property type="nucleotide sequence ID" value="NC_011529.1"/>
</dbReference>
<dbReference type="SMR" id="B6YWN8"/>
<dbReference type="STRING" id="523850.TON_1013"/>
<dbReference type="GeneID" id="7018032"/>
<dbReference type="KEGG" id="ton:TON_1013"/>
<dbReference type="PATRIC" id="fig|523850.10.peg.1021"/>
<dbReference type="eggNOG" id="arCOG01241">
    <property type="taxonomic scope" value="Archaea"/>
</dbReference>
<dbReference type="HOGENOM" id="CLU_027562_9_5_2"/>
<dbReference type="OrthoDB" id="142231at2157"/>
<dbReference type="Proteomes" id="UP000002727">
    <property type="component" value="Chromosome"/>
</dbReference>
<dbReference type="GO" id="GO:0005737">
    <property type="term" value="C:cytoplasm"/>
    <property type="evidence" value="ECO:0007669"/>
    <property type="project" value="UniProtKB-SubCell"/>
</dbReference>
<dbReference type="GO" id="GO:0003677">
    <property type="term" value="F:DNA binding"/>
    <property type="evidence" value="ECO:0007669"/>
    <property type="project" value="UniProtKB-KW"/>
</dbReference>
<dbReference type="GO" id="GO:0009037">
    <property type="term" value="F:tyrosine-based site-specific recombinase activity"/>
    <property type="evidence" value="ECO:0007669"/>
    <property type="project" value="UniProtKB-UniRule"/>
</dbReference>
<dbReference type="GO" id="GO:0006313">
    <property type="term" value="P:DNA transposition"/>
    <property type="evidence" value="ECO:0007669"/>
    <property type="project" value="UniProtKB-UniRule"/>
</dbReference>
<dbReference type="CDD" id="cd00798">
    <property type="entry name" value="INT_XerDC_C"/>
    <property type="match status" value="1"/>
</dbReference>
<dbReference type="Gene3D" id="1.10.150.130">
    <property type="match status" value="1"/>
</dbReference>
<dbReference type="Gene3D" id="1.10.443.10">
    <property type="entry name" value="Intergrase catalytic core"/>
    <property type="match status" value="1"/>
</dbReference>
<dbReference type="HAMAP" id="MF_02055">
    <property type="entry name" value="Recomb_XerA"/>
    <property type="match status" value="1"/>
</dbReference>
<dbReference type="InterPro" id="IPR044068">
    <property type="entry name" value="CB"/>
</dbReference>
<dbReference type="InterPro" id="IPR011010">
    <property type="entry name" value="DNA_brk_join_enz"/>
</dbReference>
<dbReference type="InterPro" id="IPR013762">
    <property type="entry name" value="Integrase-like_cat_sf"/>
</dbReference>
<dbReference type="InterPro" id="IPR002104">
    <property type="entry name" value="Integrase_catalytic"/>
</dbReference>
<dbReference type="InterPro" id="IPR010998">
    <property type="entry name" value="Integrase_recombinase_N"/>
</dbReference>
<dbReference type="InterPro" id="IPR004107">
    <property type="entry name" value="Integrase_SAM-like_N"/>
</dbReference>
<dbReference type="InterPro" id="IPR050090">
    <property type="entry name" value="Tyrosine_recombinase_XerCD"/>
</dbReference>
<dbReference type="InterPro" id="IPR033686">
    <property type="entry name" value="XerA"/>
</dbReference>
<dbReference type="NCBIfam" id="NF040815">
    <property type="entry name" value="recomb_XerA_Arch"/>
    <property type="match status" value="1"/>
</dbReference>
<dbReference type="PANTHER" id="PTHR30349:SF41">
    <property type="entry name" value="INTEGRASE_RECOMBINASE PROTEIN MJ0367-RELATED"/>
    <property type="match status" value="1"/>
</dbReference>
<dbReference type="PANTHER" id="PTHR30349">
    <property type="entry name" value="PHAGE INTEGRASE-RELATED"/>
    <property type="match status" value="1"/>
</dbReference>
<dbReference type="Pfam" id="PF02899">
    <property type="entry name" value="Phage_int_SAM_1"/>
    <property type="match status" value="1"/>
</dbReference>
<dbReference type="Pfam" id="PF00589">
    <property type="entry name" value="Phage_integrase"/>
    <property type="match status" value="1"/>
</dbReference>
<dbReference type="SUPFAM" id="SSF56349">
    <property type="entry name" value="DNA breaking-rejoining enzymes"/>
    <property type="match status" value="1"/>
</dbReference>
<dbReference type="PROSITE" id="PS51900">
    <property type="entry name" value="CB"/>
    <property type="match status" value="1"/>
</dbReference>
<dbReference type="PROSITE" id="PS51898">
    <property type="entry name" value="TYR_RECOMBINASE"/>
    <property type="match status" value="1"/>
</dbReference>
<comment type="function">
    <text evidence="1">Site-specific tyrosine recombinase, which acts by catalyzing the cutting and rejoining of the recombining DNA molecules.</text>
</comment>
<comment type="subcellular location">
    <subcellularLocation>
        <location evidence="1">Cytoplasm</location>
    </subcellularLocation>
</comment>
<comment type="similarity">
    <text evidence="1">Belongs to the 'phage' integrase family. XerA subfamily.</text>
</comment>
<feature type="chain" id="PRO_1000187616" description="Tyrosine recombinase XerA">
    <location>
        <begin position="1"/>
        <end position="282"/>
    </location>
</feature>
<feature type="domain" description="Core-binding (CB)" evidence="3">
    <location>
        <begin position="2"/>
        <end position="79"/>
    </location>
</feature>
<feature type="domain" description="Tyr recombinase" evidence="2">
    <location>
        <begin position="95"/>
        <end position="271"/>
    </location>
</feature>
<feature type="active site" evidence="1">
    <location>
        <position position="132"/>
    </location>
</feature>
<feature type="active site" evidence="1">
    <location>
        <position position="157"/>
    </location>
</feature>
<feature type="active site" evidence="1">
    <location>
        <position position="223"/>
    </location>
</feature>
<feature type="active site" evidence="1">
    <location>
        <position position="226"/>
    </location>
</feature>
<feature type="active site" evidence="1">
    <location>
        <position position="249"/>
    </location>
</feature>
<feature type="active site" description="O-(3'-phospho-DNA)-tyrosine intermediate" evidence="1">
    <location>
        <position position="258"/>
    </location>
</feature>
<gene>
    <name evidence="1" type="primary">xerA</name>
    <name type="ordered locus">TON_1013</name>
</gene>
<proteinExistence type="inferred from homology"/>
<accession>B6YWN8</accession>
<sequence length="282" mass="32689">MEAINEVIEEYETYLDLEGKSPNTIRMYSYYVRRYLEGGGELKARSALRFLAKLRREGYSNKSLNLVVQALRSYFRFEGYDEEAEKLRPPKVPKSLPKSLTREEVRKILSVIPPTKKRDRLIFLLLYGAGLRVSELCNLKKSDVDFERSLIIVRGGKGAKDRVVPIPAFLLEGIKAYLETRDDDSEYLIVEDRRERKDKLSPKTVWYLLKKYGDRAGIRVTPHMLRHSFATHMLENGVDIRAIQELLGHSNLSTTQIYTKVTVEHLRKAQEKARLIEGLIEK</sequence>
<keyword id="KW-0963">Cytoplasm</keyword>
<keyword id="KW-0229">DNA integration</keyword>
<keyword id="KW-0233">DNA recombination</keyword>
<keyword id="KW-0238">DNA-binding</keyword>
<name>XERA_THEON</name>
<reference key="1">
    <citation type="journal article" date="2008" name="J. Bacteriol.">
        <title>The complete genome sequence of Thermococcus onnurineus NA1 reveals a mixed heterotrophic and carboxydotrophic metabolism.</title>
        <authorList>
            <person name="Lee H.S."/>
            <person name="Kang S.G."/>
            <person name="Bae S.S."/>
            <person name="Lim J.K."/>
            <person name="Cho Y."/>
            <person name="Kim Y.J."/>
            <person name="Jeon J.H."/>
            <person name="Cha S.-S."/>
            <person name="Kwon K.K."/>
            <person name="Kim H.-T."/>
            <person name="Park C.-J."/>
            <person name="Lee H.-W."/>
            <person name="Kim S.I."/>
            <person name="Chun J."/>
            <person name="Colwell R.R."/>
            <person name="Kim S.-J."/>
            <person name="Lee J.-H."/>
        </authorList>
    </citation>
    <scope>NUCLEOTIDE SEQUENCE [LARGE SCALE GENOMIC DNA]</scope>
    <source>
        <strain>NA1</strain>
    </source>
</reference>
<organism>
    <name type="scientific">Thermococcus onnurineus (strain NA1)</name>
    <dbReference type="NCBI Taxonomy" id="523850"/>
    <lineage>
        <taxon>Archaea</taxon>
        <taxon>Methanobacteriati</taxon>
        <taxon>Methanobacteriota</taxon>
        <taxon>Thermococci</taxon>
        <taxon>Thermococcales</taxon>
        <taxon>Thermococcaceae</taxon>
        <taxon>Thermococcus</taxon>
    </lineage>
</organism>
<evidence type="ECO:0000255" key="1">
    <source>
        <dbReference type="HAMAP-Rule" id="MF_02055"/>
    </source>
</evidence>
<evidence type="ECO:0000255" key="2">
    <source>
        <dbReference type="PROSITE-ProRule" id="PRU01246"/>
    </source>
</evidence>
<evidence type="ECO:0000255" key="3">
    <source>
        <dbReference type="PROSITE-ProRule" id="PRU01248"/>
    </source>
</evidence>